<keyword id="KW-1003">Cell membrane</keyword>
<keyword id="KW-0472">Membrane</keyword>
<keyword id="KW-0735">Signal-anchor</keyword>
<keyword id="KW-0804">Transcription</keyword>
<keyword id="KW-0805">Transcription regulation</keyword>
<keyword id="KW-0812">Transmembrane</keyword>
<keyword id="KW-1133">Transmembrane helix</keyword>
<gene>
    <name type="primary">msrR</name>
    <name type="ordered locus">SACOL1398</name>
</gene>
<protein>
    <recommendedName>
        <fullName>Regulatory protein MsrR</fullName>
    </recommendedName>
</protein>
<sequence>MDKETNDNEYRRQSEHRTSAPKRKKKKKIRKLPIILLIVVILLIALVVYIVHSYNSGVEYAKKHAKDVKVHQFNGPVKNDGKISILVLGADKAQGGQSRTDSIMVVQYDFINKKMKMMSVMRDIYADIPGYGKHKINSAYALGGPELLRKTLDKNLGINPEYYAVVDFTGFEKMIDELMPEGVPINVEKDMSKNIGVSLKKGNHRLNGKELLGYARFRHDPEGDFGRVRRQQQVMQTLKKEMVNFRTVVKLPKVAGILRGYVNTNIPDSGIFQTGLSFGIRGEKDVKSLTVPIKNSYEDVNTNTDGSALQINKNTNKQAIKDFLDED</sequence>
<feature type="chain" id="PRO_0000218502" description="Regulatory protein MsrR">
    <location>
        <begin position="1"/>
        <end position="327"/>
    </location>
</feature>
<feature type="topological domain" description="Cytoplasmic" evidence="2">
    <location>
        <begin position="1"/>
        <end position="31"/>
    </location>
</feature>
<feature type="transmembrane region" description="Helical; Signal-anchor for type II membrane protein" evidence="2">
    <location>
        <begin position="32"/>
        <end position="52"/>
    </location>
</feature>
<feature type="topological domain" description="Extracellular" evidence="2">
    <location>
        <begin position="53"/>
        <end position="327"/>
    </location>
</feature>
<feature type="region of interest" description="Disordered" evidence="3">
    <location>
        <begin position="1"/>
        <end position="24"/>
    </location>
</feature>
<feature type="compositionally biased region" description="Basic and acidic residues" evidence="3">
    <location>
        <begin position="1"/>
        <end position="18"/>
    </location>
</feature>
<reference key="1">
    <citation type="journal article" date="2005" name="J. Bacteriol.">
        <title>Insights on evolution of virulence and resistance from the complete genome analysis of an early methicillin-resistant Staphylococcus aureus strain and a biofilm-producing methicillin-resistant Staphylococcus epidermidis strain.</title>
        <authorList>
            <person name="Gill S.R."/>
            <person name="Fouts D.E."/>
            <person name="Archer G.L."/>
            <person name="Mongodin E.F."/>
            <person name="DeBoy R.T."/>
            <person name="Ravel J."/>
            <person name="Paulsen I.T."/>
            <person name="Kolonay J.F."/>
            <person name="Brinkac L.M."/>
            <person name="Beanan M.J."/>
            <person name="Dodson R.J."/>
            <person name="Daugherty S.C."/>
            <person name="Madupu R."/>
            <person name="Angiuoli S.V."/>
            <person name="Durkin A.S."/>
            <person name="Haft D.H."/>
            <person name="Vamathevan J.J."/>
            <person name="Khouri H."/>
            <person name="Utterback T.R."/>
            <person name="Lee C."/>
            <person name="Dimitrov G."/>
            <person name="Jiang L."/>
            <person name="Qin H."/>
            <person name="Weidman J."/>
            <person name="Tran K."/>
            <person name="Kang K.H."/>
            <person name="Hance I.R."/>
            <person name="Nelson K.E."/>
            <person name="Fraser C.M."/>
        </authorList>
    </citation>
    <scope>NUCLEOTIDE SEQUENCE [LARGE SCALE GENOMIC DNA]</scope>
    <source>
        <strain>COL</strain>
    </source>
</reference>
<proteinExistence type="inferred from homology"/>
<comment type="function">
    <text evidence="1">Involved in SarA attenuation. Affects resistance to oxacillin and teicoplanin, as well as the synthesis of virulence factors (By similarity).</text>
</comment>
<comment type="subcellular location">
    <subcellularLocation>
        <location evidence="4">Cell membrane</location>
        <topology evidence="4">Single-pass type II membrane protein</topology>
    </subcellularLocation>
</comment>
<comment type="similarity">
    <text evidence="4">Belongs to the LytR/CpsA/Psr (LCP) family.</text>
</comment>
<accession>Q5HG57</accession>
<evidence type="ECO:0000250" key="1"/>
<evidence type="ECO:0000255" key="2"/>
<evidence type="ECO:0000256" key="3">
    <source>
        <dbReference type="SAM" id="MobiDB-lite"/>
    </source>
</evidence>
<evidence type="ECO:0000305" key="4"/>
<dbReference type="EMBL" id="CP000046">
    <property type="protein sequence ID" value="AAW36646.1"/>
    <property type="molecule type" value="Genomic_DNA"/>
</dbReference>
<dbReference type="RefSeq" id="WP_000356975.1">
    <property type="nucleotide sequence ID" value="NZ_JBGOFO010000003.1"/>
</dbReference>
<dbReference type="SMR" id="Q5HG57"/>
<dbReference type="KEGG" id="sac:SACOL1398"/>
<dbReference type="HOGENOM" id="CLU_016455_1_0_9"/>
<dbReference type="Proteomes" id="UP000000530">
    <property type="component" value="Chromosome"/>
</dbReference>
<dbReference type="GO" id="GO:0005886">
    <property type="term" value="C:plasma membrane"/>
    <property type="evidence" value="ECO:0007669"/>
    <property type="project" value="UniProtKB-SubCell"/>
</dbReference>
<dbReference type="Gene3D" id="3.40.630.190">
    <property type="entry name" value="LCP protein"/>
    <property type="match status" value="1"/>
</dbReference>
<dbReference type="InterPro" id="IPR050922">
    <property type="entry name" value="LytR/CpsA/Psr_CW_biosynth"/>
</dbReference>
<dbReference type="InterPro" id="IPR004474">
    <property type="entry name" value="LytR_CpsA_psr"/>
</dbReference>
<dbReference type="NCBIfam" id="TIGR00350">
    <property type="entry name" value="lytR_cpsA_psr"/>
    <property type="match status" value="1"/>
</dbReference>
<dbReference type="PANTHER" id="PTHR33392">
    <property type="entry name" value="POLYISOPRENYL-TEICHOIC ACID--PEPTIDOGLYCAN TEICHOIC ACID TRANSFERASE TAGU"/>
    <property type="match status" value="1"/>
</dbReference>
<dbReference type="PANTHER" id="PTHR33392:SF8">
    <property type="entry name" value="REGULATORY PROTEIN MSRR"/>
    <property type="match status" value="1"/>
</dbReference>
<dbReference type="Pfam" id="PF03816">
    <property type="entry name" value="LytR_cpsA_psr"/>
    <property type="match status" value="1"/>
</dbReference>
<name>MSRR_STAAC</name>
<organism>
    <name type="scientific">Staphylococcus aureus (strain COL)</name>
    <dbReference type="NCBI Taxonomy" id="93062"/>
    <lineage>
        <taxon>Bacteria</taxon>
        <taxon>Bacillati</taxon>
        <taxon>Bacillota</taxon>
        <taxon>Bacilli</taxon>
        <taxon>Bacillales</taxon>
        <taxon>Staphylococcaceae</taxon>
        <taxon>Staphylococcus</taxon>
    </lineage>
</organism>